<organism>
    <name type="scientific">Canis lupus familiaris</name>
    <name type="common">Dog</name>
    <name type="synonym">Canis familiaris</name>
    <dbReference type="NCBI Taxonomy" id="9615"/>
    <lineage>
        <taxon>Eukaryota</taxon>
        <taxon>Metazoa</taxon>
        <taxon>Chordata</taxon>
        <taxon>Craniata</taxon>
        <taxon>Vertebrata</taxon>
        <taxon>Euteleostomi</taxon>
        <taxon>Mammalia</taxon>
        <taxon>Eutheria</taxon>
        <taxon>Laurasiatheria</taxon>
        <taxon>Carnivora</taxon>
        <taxon>Caniformia</taxon>
        <taxon>Canidae</taxon>
        <taxon>Canis</taxon>
    </lineage>
</organism>
<accession>P06871</accession>
<feature type="signal peptide">
    <location>
        <begin position="1"/>
        <end position="15"/>
    </location>
</feature>
<feature type="propeptide" id="PRO_0000028191" description="Activation peptide">
    <location>
        <begin position="16"/>
        <end position="23"/>
    </location>
</feature>
<feature type="chain" id="PRO_0000028192" description="Serine protease 1">
    <location>
        <begin position="24"/>
        <end position="246"/>
    </location>
</feature>
<feature type="domain" description="Peptidase S1" evidence="5">
    <location>
        <begin position="24"/>
        <end position="244"/>
    </location>
</feature>
<feature type="active site" description="Charge relay system" evidence="1">
    <location>
        <position position="63"/>
    </location>
</feature>
<feature type="active site" description="Charge relay system" evidence="1">
    <location>
        <position position="107"/>
    </location>
</feature>
<feature type="active site" description="Charge relay system" evidence="1">
    <location>
        <position position="200"/>
    </location>
</feature>
<feature type="binding site" evidence="1">
    <location>
        <position position="75"/>
    </location>
    <ligand>
        <name>Ca(2+)</name>
        <dbReference type="ChEBI" id="CHEBI:29108"/>
    </ligand>
</feature>
<feature type="binding site" evidence="1">
    <location>
        <position position="77"/>
    </location>
    <ligand>
        <name>Ca(2+)</name>
        <dbReference type="ChEBI" id="CHEBI:29108"/>
    </ligand>
</feature>
<feature type="binding site" evidence="1">
    <location>
        <position position="80"/>
    </location>
    <ligand>
        <name>Ca(2+)</name>
        <dbReference type="ChEBI" id="CHEBI:29108"/>
    </ligand>
</feature>
<feature type="binding site" evidence="1">
    <location>
        <position position="85"/>
    </location>
    <ligand>
        <name>Ca(2+)</name>
        <dbReference type="ChEBI" id="CHEBI:29108"/>
    </ligand>
</feature>
<feature type="site" description="Required for specificity" evidence="1">
    <location>
        <position position="194"/>
    </location>
</feature>
<feature type="disulfide bond" evidence="5">
    <location>
        <begin position="30"/>
        <end position="160"/>
    </location>
</feature>
<feature type="disulfide bond" evidence="5">
    <location>
        <begin position="48"/>
        <end position="64"/>
    </location>
</feature>
<feature type="disulfide bond" evidence="5">
    <location>
        <begin position="132"/>
        <end position="233"/>
    </location>
</feature>
<feature type="disulfide bond" evidence="5">
    <location>
        <begin position="139"/>
        <end position="206"/>
    </location>
</feature>
<feature type="disulfide bond" evidence="5">
    <location>
        <begin position="171"/>
        <end position="185"/>
    </location>
</feature>
<feature type="disulfide bond" evidence="5">
    <location>
        <begin position="196"/>
        <end position="220"/>
    </location>
</feature>
<name>TRY1_CANLF</name>
<dbReference type="EC" id="3.4.21.4"/>
<dbReference type="EMBL" id="M11590">
    <property type="protein sequence ID" value="AAA30900.1"/>
    <property type="molecule type" value="mRNA"/>
</dbReference>
<dbReference type="PIR" id="B26273">
    <property type="entry name" value="TRDGC"/>
</dbReference>
<dbReference type="SMR" id="P06871"/>
<dbReference type="FunCoup" id="P06871">
    <property type="interactions" value="13"/>
</dbReference>
<dbReference type="STRING" id="9615.ENSCAFP00000005682"/>
<dbReference type="MEROPS" id="S01.151"/>
<dbReference type="PaxDb" id="9612-ENSCAFP00000005682"/>
<dbReference type="eggNOG" id="KOG3627">
    <property type="taxonomic scope" value="Eukaryota"/>
</dbReference>
<dbReference type="InParanoid" id="P06871"/>
<dbReference type="Proteomes" id="UP000002254">
    <property type="component" value="Unplaced"/>
</dbReference>
<dbReference type="Proteomes" id="UP000694429">
    <property type="component" value="Unplaced"/>
</dbReference>
<dbReference type="Proteomes" id="UP000694542">
    <property type="component" value="Unplaced"/>
</dbReference>
<dbReference type="Proteomes" id="UP000805418">
    <property type="component" value="Unplaced"/>
</dbReference>
<dbReference type="GO" id="GO:0005615">
    <property type="term" value="C:extracellular space"/>
    <property type="evidence" value="ECO:0000318"/>
    <property type="project" value="GO_Central"/>
</dbReference>
<dbReference type="GO" id="GO:0046872">
    <property type="term" value="F:metal ion binding"/>
    <property type="evidence" value="ECO:0007669"/>
    <property type="project" value="UniProtKB-KW"/>
</dbReference>
<dbReference type="GO" id="GO:0004252">
    <property type="term" value="F:serine-type endopeptidase activity"/>
    <property type="evidence" value="ECO:0000318"/>
    <property type="project" value="GO_Central"/>
</dbReference>
<dbReference type="GO" id="GO:0007586">
    <property type="term" value="P:digestion"/>
    <property type="evidence" value="ECO:0007669"/>
    <property type="project" value="UniProtKB-KW"/>
</dbReference>
<dbReference type="GO" id="GO:0006508">
    <property type="term" value="P:proteolysis"/>
    <property type="evidence" value="ECO:0007669"/>
    <property type="project" value="UniProtKB-KW"/>
</dbReference>
<dbReference type="CDD" id="cd00190">
    <property type="entry name" value="Tryp_SPc"/>
    <property type="match status" value="1"/>
</dbReference>
<dbReference type="FunFam" id="2.40.10.10:FF:000019">
    <property type="entry name" value="Anionic trypsin"/>
    <property type="match status" value="1"/>
</dbReference>
<dbReference type="Gene3D" id="2.40.10.10">
    <property type="entry name" value="Trypsin-like serine proteases"/>
    <property type="match status" value="2"/>
</dbReference>
<dbReference type="InterPro" id="IPR009003">
    <property type="entry name" value="Peptidase_S1_PA"/>
</dbReference>
<dbReference type="InterPro" id="IPR043504">
    <property type="entry name" value="Peptidase_S1_PA_chymotrypsin"/>
</dbReference>
<dbReference type="InterPro" id="IPR001314">
    <property type="entry name" value="Peptidase_S1A"/>
</dbReference>
<dbReference type="InterPro" id="IPR050127">
    <property type="entry name" value="Serine_Proteases_S1"/>
</dbReference>
<dbReference type="InterPro" id="IPR001254">
    <property type="entry name" value="Trypsin_dom"/>
</dbReference>
<dbReference type="InterPro" id="IPR018114">
    <property type="entry name" value="TRYPSIN_HIS"/>
</dbReference>
<dbReference type="InterPro" id="IPR033116">
    <property type="entry name" value="TRYPSIN_SER"/>
</dbReference>
<dbReference type="PANTHER" id="PTHR24264:SF15">
    <property type="entry name" value="RIKEN CDNA 2210010C04 GENE"/>
    <property type="match status" value="1"/>
</dbReference>
<dbReference type="PANTHER" id="PTHR24264">
    <property type="entry name" value="TRYPSIN-RELATED"/>
    <property type="match status" value="1"/>
</dbReference>
<dbReference type="Pfam" id="PF00089">
    <property type="entry name" value="Trypsin"/>
    <property type="match status" value="1"/>
</dbReference>
<dbReference type="PRINTS" id="PR00722">
    <property type="entry name" value="CHYMOTRYPSIN"/>
</dbReference>
<dbReference type="SMART" id="SM00020">
    <property type="entry name" value="Tryp_SPc"/>
    <property type="match status" value="1"/>
</dbReference>
<dbReference type="SUPFAM" id="SSF50494">
    <property type="entry name" value="Trypsin-like serine proteases"/>
    <property type="match status" value="1"/>
</dbReference>
<dbReference type="PROSITE" id="PS50240">
    <property type="entry name" value="TRYPSIN_DOM"/>
    <property type="match status" value="1"/>
</dbReference>
<dbReference type="PROSITE" id="PS00134">
    <property type="entry name" value="TRYPSIN_HIS"/>
    <property type="match status" value="1"/>
</dbReference>
<dbReference type="PROSITE" id="PS00135">
    <property type="entry name" value="TRYPSIN_SER"/>
    <property type="match status" value="1"/>
</dbReference>
<sequence>MKTFIFLALLGATVAFPIDDDDKIVGGYTCSRNSVPYQVSLNSGYHFCGGSLINSQWVVSAAHCYKSRIQVRLGEYNIAVSEGGEQFINAAKIIRHPRYNANTIDNDIMLIKLSSPATLNSRVSAIALPKSCPAAGTQCLISGWGNTQSIGQNYPDVLQCLKAPILSDSVCRNAYPGQISSNMMCLGYMEGGKDSCQGDSGGPVVCNGELQGVVSWGAGCAQKGKPGVSPKVCKYVSWIQQTIAAN</sequence>
<proteinExistence type="evidence at transcript level"/>
<comment type="catalytic activity">
    <reaction>
        <text>Preferential cleavage: Arg-|-Xaa, Lys-|-Xaa.</text>
        <dbReference type="EC" id="3.4.21.4"/>
    </reaction>
</comment>
<comment type="cofactor">
    <cofactor evidence="1">
        <name>Ca(2+)</name>
        <dbReference type="ChEBI" id="CHEBI:29108"/>
    </cofactor>
    <text evidence="1">Binds 1 Ca(2+) ion per subunit.</text>
</comment>
<comment type="subunit">
    <text evidence="2">Interacts with SERPINA1.</text>
</comment>
<comment type="subcellular location">
    <subcellularLocation>
        <location>Secreted</location>
        <location>Extracellular space</location>
    </subcellularLocation>
</comment>
<comment type="similarity">
    <text evidence="5">Belongs to the peptidase S1 family.</text>
</comment>
<evidence type="ECO:0000250" key="1"/>
<evidence type="ECO:0000250" key="2">
    <source>
        <dbReference type="UniProtKB" id="P00760"/>
    </source>
</evidence>
<evidence type="ECO:0000250" key="3">
    <source>
        <dbReference type="UniProtKB" id="P00762"/>
    </source>
</evidence>
<evidence type="ECO:0000250" key="4">
    <source>
        <dbReference type="UniProtKB" id="P07477"/>
    </source>
</evidence>
<evidence type="ECO:0000255" key="5">
    <source>
        <dbReference type="PROSITE-ProRule" id="PRU00274"/>
    </source>
</evidence>
<reference key="1">
    <citation type="journal article" date="1985" name="Mol. Cell. Biol.">
        <title>Differential regulation of trypsinogen mRNA translation: full-length mRNA sequences encoding two oppositely charged trypsinogen isoenzymes in the dog pancreas.</title>
        <authorList>
            <person name="Pinsky S.D."/>
            <person name="Laforge K.S."/>
            <person name="Scheele G."/>
        </authorList>
    </citation>
    <scope>NUCLEOTIDE SEQUENCE [MRNA]</scope>
</reference>
<protein>
    <recommendedName>
        <fullName evidence="4">Serine protease 1</fullName>
        <ecNumber>3.4.21.4</ecNumber>
    </recommendedName>
    <alternativeName>
        <fullName evidence="3">Anionic trypsin I</fullName>
    </alternativeName>
    <alternativeName>
        <fullName evidence="3">Anionic trypsin-1</fullName>
    </alternativeName>
    <alternativeName>
        <fullName>Beta-trypsin</fullName>
    </alternativeName>
    <alternativeName>
        <fullName>Cationic trypsinogen</fullName>
    </alternativeName>
    <alternativeName>
        <fullName evidence="3">Pretrypsinogen I</fullName>
    </alternativeName>
    <alternativeName>
        <fullName evidence="4">Trypsin I</fullName>
    </alternativeName>
    <alternativeName>
        <fullName>Trypsin-1</fullName>
    </alternativeName>
</protein>
<gene>
    <name evidence="4" type="primary">PRSS1</name>
    <name type="synonym">TRP1</name>
    <name evidence="4" type="synonym">TRY1</name>
    <name type="synonym">TRYP1</name>
</gene>
<keyword id="KW-0106">Calcium</keyword>
<keyword id="KW-0222">Digestion</keyword>
<keyword id="KW-1015">Disulfide bond</keyword>
<keyword id="KW-0378">Hydrolase</keyword>
<keyword id="KW-0479">Metal-binding</keyword>
<keyword id="KW-0645">Protease</keyword>
<keyword id="KW-1185">Reference proteome</keyword>
<keyword id="KW-0964">Secreted</keyword>
<keyword id="KW-0720">Serine protease</keyword>
<keyword id="KW-0732">Signal</keyword>
<keyword id="KW-0865">Zymogen</keyword>